<comment type="alternative products">
    <event type="alternative splicing"/>
    <isoform>
        <id>Q8LD26-1</id>
        <name>1</name>
        <sequence type="displayed"/>
    </isoform>
    <isoform>
        <id>Q8LD26-2</id>
        <name>2</name>
        <sequence type="described" ref="VSP_058257"/>
    </isoform>
    <isoform>
        <id>Q8LD26-3</id>
        <name>3</name>
        <sequence type="described" ref="VSP_058260 VSP_058261"/>
    </isoform>
    <isoform>
        <id>Q8LD26-4</id>
        <name>4</name>
        <sequence type="described" ref="VSP_058259 VSP_058262"/>
    </isoform>
    <isoform>
        <id>Q8LD26-5</id>
        <name>5</name>
        <sequence type="described" ref="VSP_058258"/>
    </isoform>
</comment>
<comment type="similarity">
    <text evidence="3">Belongs to the DRM1/ARP family.</text>
</comment>
<name>DRMH3_ARATH</name>
<dbReference type="EMBL" id="AC069159">
    <property type="protein sequence ID" value="AAG50916.1"/>
    <property type="molecule type" value="Genomic_DNA"/>
</dbReference>
<dbReference type="EMBL" id="CP002684">
    <property type="protein sequence ID" value="AEE33361.1"/>
    <property type="molecule type" value="Genomic_DNA"/>
</dbReference>
<dbReference type="EMBL" id="CP002684">
    <property type="protein sequence ID" value="AEE33362.1"/>
    <property type="molecule type" value="Genomic_DNA"/>
</dbReference>
<dbReference type="EMBL" id="BT001991">
    <property type="protein sequence ID" value="AAN72002.1"/>
    <property type="molecule type" value="mRNA"/>
</dbReference>
<dbReference type="EMBL" id="BT006528">
    <property type="protein sequence ID" value="AAP21336.1"/>
    <property type="molecule type" value="mRNA"/>
</dbReference>
<dbReference type="EMBL" id="AK317418">
    <property type="protein sequence ID" value="BAH20086.1"/>
    <property type="molecule type" value="mRNA"/>
</dbReference>
<dbReference type="EMBL" id="AY086244">
    <property type="protein sequence ID" value="AAM64319.1"/>
    <property type="molecule type" value="mRNA"/>
</dbReference>
<dbReference type="PIR" id="G96603">
    <property type="entry name" value="G96603"/>
</dbReference>
<dbReference type="RefSeq" id="NP_564714.1">
    <molecule id="Q8LD26-1"/>
    <property type="nucleotide sequence ID" value="NM_104501.4"/>
</dbReference>
<dbReference type="RefSeq" id="NP_849819.1">
    <molecule id="Q8LD26-4"/>
    <property type="nucleotide sequence ID" value="NM_179488.1"/>
</dbReference>
<dbReference type="FunCoup" id="Q8LD26">
    <property type="interactions" value="359"/>
</dbReference>
<dbReference type="IntAct" id="Q8LD26">
    <property type="interactions" value="1"/>
</dbReference>
<dbReference type="STRING" id="3702.Q8LD26"/>
<dbReference type="GlyGen" id="Q8LD26">
    <property type="glycosylation" value="1 site"/>
</dbReference>
<dbReference type="iPTMnet" id="Q8LD26"/>
<dbReference type="PaxDb" id="3702-AT1G56220.3"/>
<dbReference type="ProteomicsDB" id="224357">
    <molecule id="Q8LD26-1"/>
</dbReference>
<dbReference type="EnsemblPlants" id="AT1G56220.1">
    <molecule id="Q8LD26-1"/>
    <property type="protein sequence ID" value="AT1G56220.1"/>
    <property type="gene ID" value="AT1G56220"/>
</dbReference>
<dbReference type="EnsemblPlants" id="AT1G56220.2">
    <molecule id="Q8LD26-4"/>
    <property type="protein sequence ID" value="AT1G56220.2"/>
    <property type="gene ID" value="AT1G56220"/>
</dbReference>
<dbReference type="GeneID" id="842075"/>
<dbReference type="Gramene" id="AT1G56220.1">
    <molecule id="Q8LD26-1"/>
    <property type="protein sequence ID" value="AT1G56220.1"/>
    <property type="gene ID" value="AT1G56220"/>
</dbReference>
<dbReference type="Gramene" id="AT1G56220.2">
    <molecule id="Q8LD26-4"/>
    <property type="protein sequence ID" value="AT1G56220.2"/>
    <property type="gene ID" value="AT1G56220"/>
</dbReference>
<dbReference type="KEGG" id="ath:AT1G56220"/>
<dbReference type="Araport" id="AT1G56220"/>
<dbReference type="TAIR" id="AT1G56220"/>
<dbReference type="eggNOG" id="ENOG502S6R7">
    <property type="taxonomic scope" value="Eukaryota"/>
</dbReference>
<dbReference type="HOGENOM" id="CLU_116501_1_2_1"/>
<dbReference type="InParanoid" id="Q8LD26"/>
<dbReference type="OMA" id="LTMCECE"/>
<dbReference type="PhylomeDB" id="Q8LD26"/>
<dbReference type="PRO" id="PR:Q8LD26"/>
<dbReference type="Proteomes" id="UP000006548">
    <property type="component" value="Chromosome 1"/>
</dbReference>
<dbReference type="ExpressionAtlas" id="Q8LD26">
    <property type="expression patterns" value="baseline and differential"/>
</dbReference>
<dbReference type="InterPro" id="IPR008406">
    <property type="entry name" value="DRM/ARP"/>
</dbReference>
<dbReference type="PANTHER" id="PTHR33565">
    <property type="entry name" value="DORMANCY-ASSOCIATED PROTEIN 1"/>
    <property type="match status" value="1"/>
</dbReference>
<dbReference type="PANTHER" id="PTHR33565:SF1">
    <property type="entry name" value="DORMANCY-ASSOCIATED PROTEIN HOMOLOG 3"/>
    <property type="match status" value="1"/>
</dbReference>
<dbReference type="Pfam" id="PF05564">
    <property type="entry name" value="Auxin_repressed"/>
    <property type="match status" value="1"/>
</dbReference>
<feature type="chain" id="PRO_0000436082" description="Dormancy-associated protein homolog 3">
    <location>
        <begin position="1"/>
        <end position="137"/>
    </location>
</feature>
<feature type="region of interest" description="Disordered" evidence="2">
    <location>
        <begin position="1"/>
        <end position="55"/>
    </location>
</feature>
<feature type="region of interest" description="Disordered" evidence="2">
    <location>
        <begin position="69"/>
        <end position="137"/>
    </location>
</feature>
<feature type="compositionally biased region" description="Polar residues" evidence="2">
    <location>
        <begin position="32"/>
        <end position="43"/>
    </location>
</feature>
<feature type="compositionally biased region" description="Low complexity" evidence="2">
    <location>
        <begin position="70"/>
        <end position="87"/>
    </location>
</feature>
<feature type="compositionally biased region" description="Pro residues" evidence="2">
    <location>
        <begin position="88"/>
        <end position="97"/>
    </location>
</feature>
<feature type="compositionally biased region" description="Basic and acidic residues" evidence="2">
    <location>
        <begin position="104"/>
        <end position="118"/>
    </location>
</feature>
<feature type="compositionally biased region" description="Polar residues" evidence="2">
    <location>
        <begin position="127"/>
        <end position="137"/>
    </location>
</feature>
<feature type="modified residue" description="Phosphoserine" evidence="1">
    <location>
        <position position="81"/>
    </location>
</feature>
<feature type="splice variant" id="VSP_058257" description="In isoform 2.">
    <original>S</original>
    <variation>SANA</variation>
    <location>
        <position position="100"/>
    </location>
</feature>
<feature type="splice variant" id="VSP_058258" description="In isoform 5.">
    <original>GGKEPFRFRRRSTSDAFEKAAGGSETGPRSSPPTYGM</original>
    <variation>EQTQGERNPFGLGDGRRRMRSRRQQEDQRLDQGALLLLTACDL</variation>
    <location>
        <begin position="101"/>
        <end position="137"/>
    </location>
</feature>
<feature type="splice variant" id="VSP_058259" description="In isoform 4.">
    <original>GKEPFRFRRRS</original>
    <variation>DKRRGKGTLSV</variation>
    <location>
        <begin position="102"/>
        <end position="112"/>
    </location>
</feature>
<feature type="splice variant" id="VSP_058260" description="In isoform 3.">
    <original>GKEPFRFR</original>
    <variation>EGKGTLSV</variation>
    <location>
        <begin position="102"/>
        <end position="109"/>
    </location>
</feature>
<feature type="splice variant" id="VSP_058261" description="In isoform 3.">
    <location>
        <begin position="110"/>
        <end position="137"/>
    </location>
</feature>
<feature type="splice variant" id="VSP_058262" description="In isoform 4.">
    <location>
        <begin position="113"/>
        <end position="137"/>
    </location>
</feature>
<gene>
    <name evidence="4" type="ordered locus">At1g56220</name>
    <name evidence="5" type="ORF">F14G9.17</name>
</gene>
<keyword id="KW-0025">Alternative splicing</keyword>
<keyword id="KW-0597">Phosphoprotein</keyword>
<keyword id="KW-1185">Reference proteome</keyword>
<evidence type="ECO:0000250" key="1">
    <source>
        <dbReference type="UniProtKB" id="P93017"/>
    </source>
</evidence>
<evidence type="ECO:0000256" key="2">
    <source>
        <dbReference type="SAM" id="MobiDB-lite"/>
    </source>
</evidence>
<evidence type="ECO:0000305" key="3"/>
<evidence type="ECO:0000312" key="4">
    <source>
        <dbReference type="Araport" id="AT1G56220"/>
    </source>
</evidence>
<evidence type="ECO:0000312" key="5">
    <source>
        <dbReference type="EMBL" id="AAG50916.1"/>
    </source>
</evidence>
<evidence type="ECO:0000312" key="6">
    <source>
        <dbReference type="EMBL" id="AAM64319.1"/>
    </source>
</evidence>
<reference key="1">
    <citation type="journal article" date="2000" name="Nature">
        <title>Sequence and analysis of chromosome 1 of the plant Arabidopsis thaliana.</title>
        <authorList>
            <person name="Theologis A."/>
            <person name="Ecker J.R."/>
            <person name="Palm C.J."/>
            <person name="Federspiel N.A."/>
            <person name="Kaul S."/>
            <person name="White O."/>
            <person name="Alonso J."/>
            <person name="Altafi H."/>
            <person name="Araujo R."/>
            <person name="Bowman C.L."/>
            <person name="Brooks S.Y."/>
            <person name="Buehler E."/>
            <person name="Chan A."/>
            <person name="Chao Q."/>
            <person name="Chen H."/>
            <person name="Cheuk R.F."/>
            <person name="Chin C.W."/>
            <person name="Chung M.K."/>
            <person name="Conn L."/>
            <person name="Conway A.B."/>
            <person name="Conway A.R."/>
            <person name="Creasy T.H."/>
            <person name="Dewar K."/>
            <person name="Dunn P."/>
            <person name="Etgu P."/>
            <person name="Feldblyum T.V."/>
            <person name="Feng J.-D."/>
            <person name="Fong B."/>
            <person name="Fujii C.Y."/>
            <person name="Gill J.E."/>
            <person name="Goldsmith A.D."/>
            <person name="Haas B."/>
            <person name="Hansen N.F."/>
            <person name="Hughes B."/>
            <person name="Huizar L."/>
            <person name="Hunter J.L."/>
            <person name="Jenkins J."/>
            <person name="Johnson-Hopson C."/>
            <person name="Khan S."/>
            <person name="Khaykin E."/>
            <person name="Kim C.J."/>
            <person name="Koo H.L."/>
            <person name="Kremenetskaia I."/>
            <person name="Kurtz D.B."/>
            <person name="Kwan A."/>
            <person name="Lam B."/>
            <person name="Langin-Hooper S."/>
            <person name="Lee A."/>
            <person name="Lee J.M."/>
            <person name="Lenz C.A."/>
            <person name="Li J.H."/>
            <person name="Li Y.-P."/>
            <person name="Lin X."/>
            <person name="Liu S.X."/>
            <person name="Liu Z.A."/>
            <person name="Luros J.S."/>
            <person name="Maiti R."/>
            <person name="Marziali A."/>
            <person name="Militscher J."/>
            <person name="Miranda M."/>
            <person name="Nguyen M."/>
            <person name="Nierman W.C."/>
            <person name="Osborne B.I."/>
            <person name="Pai G."/>
            <person name="Peterson J."/>
            <person name="Pham P.K."/>
            <person name="Rizzo M."/>
            <person name="Rooney T."/>
            <person name="Rowley D."/>
            <person name="Sakano H."/>
            <person name="Salzberg S.L."/>
            <person name="Schwartz J.R."/>
            <person name="Shinn P."/>
            <person name="Southwick A.M."/>
            <person name="Sun H."/>
            <person name="Tallon L.J."/>
            <person name="Tambunga G."/>
            <person name="Toriumi M.J."/>
            <person name="Town C.D."/>
            <person name="Utterback T."/>
            <person name="Van Aken S."/>
            <person name="Vaysberg M."/>
            <person name="Vysotskaia V.S."/>
            <person name="Walker M."/>
            <person name="Wu D."/>
            <person name="Yu G."/>
            <person name="Fraser C.M."/>
            <person name="Venter J.C."/>
            <person name="Davis R.W."/>
        </authorList>
    </citation>
    <scope>NUCLEOTIDE SEQUENCE [LARGE SCALE GENOMIC DNA]</scope>
    <source>
        <strain>cv. Columbia</strain>
    </source>
</reference>
<reference key="2">
    <citation type="journal article" date="2017" name="Plant J.">
        <title>Araport11: a complete reannotation of the Arabidopsis thaliana reference genome.</title>
        <authorList>
            <person name="Cheng C.Y."/>
            <person name="Krishnakumar V."/>
            <person name="Chan A.P."/>
            <person name="Thibaud-Nissen F."/>
            <person name="Schobel S."/>
            <person name="Town C.D."/>
        </authorList>
    </citation>
    <scope>GENOME REANNOTATION</scope>
    <source>
        <strain>cv. Columbia</strain>
    </source>
</reference>
<reference key="3">
    <citation type="journal article" date="2003" name="Science">
        <title>Empirical analysis of transcriptional activity in the Arabidopsis genome.</title>
        <authorList>
            <person name="Yamada K."/>
            <person name="Lim J."/>
            <person name="Dale J.M."/>
            <person name="Chen H."/>
            <person name="Shinn P."/>
            <person name="Palm C.J."/>
            <person name="Southwick A.M."/>
            <person name="Wu H.C."/>
            <person name="Kim C.J."/>
            <person name="Nguyen M."/>
            <person name="Pham P.K."/>
            <person name="Cheuk R.F."/>
            <person name="Karlin-Newmann G."/>
            <person name="Liu S.X."/>
            <person name="Lam B."/>
            <person name="Sakano H."/>
            <person name="Wu T."/>
            <person name="Yu G."/>
            <person name="Miranda M."/>
            <person name="Quach H.L."/>
            <person name="Tripp M."/>
            <person name="Chang C.H."/>
            <person name="Lee J.M."/>
            <person name="Toriumi M.J."/>
            <person name="Chan M.M."/>
            <person name="Tang C.C."/>
            <person name="Onodera C.S."/>
            <person name="Deng J.M."/>
            <person name="Akiyama K."/>
            <person name="Ansari Y."/>
            <person name="Arakawa T."/>
            <person name="Banh J."/>
            <person name="Banno F."/>
            <person name="Bowser L."/>
            <person name="Brooks S.Y."/>
            <person name="Carninci P."/>
            <person name="Chao Q."/>
            <person name="Choy N."/>
            <person name="Enju A."/>
            <person name="Goldsmith A.D."/>
            <person name="Gurjal M."/>
            <person name="Hansen N.F."/>
            <person name="Hayashizaki Y."/>
            <person name="Johnson-Hopson C."/>
            <person name="Hsuan V.W."/>
            <person name="Iida K."/>
            <person name="Karnes M."/>
            <person name="Khan S."/>
            <person name="Koesema E."/>
            <person name="Ishida J."/>
            <person name="Jiang P.X."/>
            <person name="Jones T."/>
            <person name="Kawai J."/>
            <person name="Kamiya A."/>
            <person name="Meyers C."/>
            <person name="Nakajima M."/>
            <person name="Narusaka M."/>
            <person name="Seki M."/>
            <person name="Sakurai T."/>
            <person name="Satou M."/>
            <person name="Tamse R."/>
            <person name="Vaysberg M."/>
            <person name="Wallender E.K."/>
            <person name="Wong C."/>
            <person name="Yamamura Y."/>
            <person name="Yuan S."/>
            <person name="Shinozaki K."/>
            <person name="Davis R.W."/>
            <person name="Theologis A."/>
            <person name="Ecker J.R."/>
        </authorList>
    </citation>
    <scope>NUCLEOTIDE SEQUENCE [LARGE SCALE MRNA] (ISOFORM 5)</scope>
    <source>
        <strain>cv. Columbia</strain>
    </source>
</reference>
<reference key="4">
    <citation type="journal article" date="2009" name="DNA Res.">
        <title>Analysis of multiple occurrences of alternative splicing events in Arabidopsis thaliana using novel sequenced full-length cDNAs.</title>
        <authorList>
            <person name="Iida K."/>
            <person name="Fukami-Kobayashi K."/>
            <person name="Toyoda A."/>
            <person name="Sakaki Y."/>
            <person name="Kobayashi M."/>
            <person name="Seki M."/>
            <person name="Shinozaki K."/>
        </authorList>
    </citation>
    <scope>NUCLEOTIDE SEQUENCE [LARGE SCALE MRNA] (ISOFORM 1)</scope>
    <source>
        <strain>cv. Columbia</strain>
    </source>
</reference>
<reference key="5">
    <citation type="submission" date="2002-03" db="EMBL/GenBank/DDBJ databases">
        <title>Full-length cDNA from Arabidopsis thaliana.</title>
        <authorList>
            <person name="Brover V.V."/>
            <person name="Troukhan M.E."/>
            <person name="Alexandrov N.A."/>
            <person name="Lu Y.-P."/>
            <person name="Flavell R.B."/>
            <person name="Feldmann K.A."/>
        </authorList>
    </citation>
    <scope>NUCLEOTIDE SEQUENCE [LARGE SCALE MRNA] (ISOFORM 1)</scope>
</reference>
<reference key="6">
    <citation type="journal article" date="2009" name="Plant Physiol.">
        <title>Large-scale Arabidopsis phosphoproteome profiling reveals novel chloroplast kinase substrates and phosphorylation networks.</title>
        <authorList>
            <person name="Reiland S."/>
            <person name="Messerli G."/>
            <person name="Baerenfaller K."/>
            <person name="Gerrits B."/>
            <person name="Endler A."/>
            <person name="Grossmann J."/>
            <person name="Gruissem W."/>
            <person name="Baginsky S."/>
        </authorList>
    </citation>
    <scope>IDENTIFICATION BY MASS SPECTROMETRY [LARGE SCALE ANALYSIS]</scope>
</reference>
<protein>
    <recommendedName>
        <fullName evidence="3">Dormancy-associated protein homolog 3</fullName>
    </recommendedName>
    <alternativeName>
        <fullName evidence="3">DRM1 homolog 3</fullName>
    </alternativeName>
</protein>
<organism evidence="6">
    <name type="scientific">Arabidopsis thaliana</name>
    <name type="common">Mouse-ear cress</name>
    <dbReference type="NCBI Taxonomy" id="3702"/>
    <lineage>
        <taxon>Eukaryota</taxon>
        <taxon>Viridiplantae</taxon>
        <taxon>Streptophyta</taxon>
        <taxon>Embryophyta</taxon>
        <taxon>Tracheophyta</taxon>
        <taxon>Spermatophyta</taxon>
        <taxon>Magnoliopsida</taxon>
        <taxon>eudicotyledons</taxon>
        <taxon>Gunneridae</taxon>
        <taxon>Pentapetalae</taxon>
        <taxon>rosids</taxon>
        <taxon>malvids</taxon>
        <taxon>Brassicales</taxon>
        <taxon>Brassicaceae</taxon>
        <taxon>Camelineae</taxon>
        <taxon>Arabidopsis</taxon>
    </lineage>
</organism>
<sequence>MGLLDHLWDDTVAGPRPENGLGKLRKHHTFSFRPSSGNDQSEAGSARSYGEDSLPEEAVKVTRSIMIIKPPGYQGSSAPASPAGSTPPLSPFSPPLSPFSGGKEPFRFRRRSTSDAFEKAAGGSETGPRSSPPTYGM</sequence>
<accession>Q8LD26</accession>
<accession>A8MSC4</accession>
<accession>F4I3L7</accession>
<accession>Q8H0W7</accession>
<accession>Q9C7J7</accession>
<proteinExistence type="evidence at protein level"/>